<protein>
    <recommendedName>
        <fullName evidence="1">Co-chaperone protein HscB</fullName>
    </recommendedName>
    <alternativeName>
        <fullName evidence="1">Hsc20</fullName>
    </alternativeName>
</protein>
<name>HSCB_ECODH</name>
<feature type="chain" id="PRO_1000131736" description="Co-chaperone protein HscB">
    <location>
        <begin position="1"/>
        <end position="171"/>
    </location>
</feature>
<feature type="domain" description="J" evidence="1">
    <location>
        <begin position="2"/>
        <end position="74"/>
    </location>
</feature>
<proteinExistence type="inferred from homology"/>
<organism>
    <name type="scientific">Escherichia coli (strain K12 / DH10B)</name>
    <dbReference type="NCBI Taxonomy" id="316385"/>
    <lineage>
        <taxon>Bacteria</taxon>
        <taxon>Pseudomonadati</taxon>
        <taxon>Pseudomonadota</taxon>
        <taxon>Gammaproteobacteria</taxon>
        <taxon>Enterobacterales</taxon>
        <taxon>Enterobacteriaceae</taxon>
        <taxon>Escherichia</taxon>
    </lineage>
</organism>
<dbReference type="EMBL" id="CP000948">
    <property type="protein sequence ID" value="ACB03679.1"/>
    <property type="molecule type" value="Genomic_DNA"/>
</dbReference>
<dbReference type="RefSeq" id="WP_000384413.1">
    <property type="nucleotide sequence ID" value="NC_010473.1"/>
</dbReference>
<dbReference type="SMR" id="B1XB02"/>
<dbReference type="GeneID" id="75172640"/>
<dbReference type="KEGG" id="ecd:ECDH10B_2694"/>
<dbReference type="HOGENOM" id="CLU_068529_2_0_6"/>
<dbReference type="GO" id="GO:1990230">
    <property type="term" value="C:iron-sulfur cluster transfer complex"/>
    <property type="evidence" value="ECO:0007669"/>
    <property type="project" value="TreeGrafter"/>
</dbReference>
<dbReference type="GO" id="GO:0001671">
    <property type="term" value="F:ATPase activator activity"/>
    <property type="evidence" value="ECO:0007669"/>
    <property type="project" value="InterPro"/>
</dbReference>
<dbReference type="GO" id="GO:0051087">
    <property type="term" value="F:protein-folding chaperone binding"/>
    <property type="evidence" value="ECO:0007669"/>
    <property type="project" value="InterPro"/>
</dbReference>
<dbReference type="GO" id="GO:0044571">
    <property type="term" value="P:[2Fe-2S] cluster assembly"/>
    <property type="evidence" value="ECO:0007669"/>
    <property type="project" value="InterPro"/>
</dbReference>
<dbReference type="GO" id="GO:0051259">
    <property type="term" value="P:protein complex oligomerization"/>
    <property type="evidence" value="ECO:0007669"/>
    <property type="project" value="InterPro"/>
</dbReference>
<dbReference type="GO" id="GO:0006457">
    <property type="term" value="P:protein folding"/>
    <property type="evidence" value="ECO:0007669"/>
    <property type="project" value="UniProtKB-UniRule"/>
</dbReference>
<dbReference type="CDD" id="cd06257">
    <property type="entry name" value="DnaJ"/>
    <property type="match status" value="1"/>
</dbReference>
<dbReference type="FunFam" id="1.10.287.110:FF:000008">
    <property type="entry name" value="Co-chaperone protein HscB"/>
    <property type="match status" value="1"/>
</dbReference>
<dbReference type="FunFam" id="1.20.1280.20:FF:000001">
    <property type="entry name" value="Co-chaperone protein HscB"/>
    <property type="match status" value="1"/>
</dbReference>
<dbReference type="Gene3D" id="1.10.287.110">
    <property type="entry name" value="DnaJ domain"/>
    <property type="match status" value="1"/>
</dbReference>
<dbReference type="Gene3D" id="1.20.1280.20">
    <property type="entry name" value="HscB, C-terminal domain"/>
    <property type="match status" value="1"/>
</dbReference>
<dbReference type="HAMAP" id="MF_00682">
    <property type="entry name" value="HscB"/>
    <property type="match status" value="1"/>
</dbReference>
<dbReference type="InterPro" id="IPR001623">
    <property type="entry name" value="DnaJ_domain"/>
</dbReference>
<dbReference type="InterPro" id="IPR004640">
    <property type="entry name" value="HscB"/>
</dbReference>
<dbReference type="InterPro" id="IPR036386">
    <property type="entry name" value="HscB_C_sf"/>
</dbReference>
<dbReference type="InterPro" id="IPR009073">
    <property type="entry name" value="HscB_oligo_C"/>
</dbReference>
<dbReference type="InterPro" id="IPR036869">
    <property type="entry name" value="J_dom_sf"/>
</dbReference>
<dbReference type="NCBIfam" id="TIGR00714">
    <property type="entry name" value="hscB"/>
    <property type="match status" value="1"/>
</dbReference>
<dbReference type="NCBIfam" id="NF003449">
    <property type="entry name" value="PRK05014.1"/>
    <property type="match status" value="1"/>
</dbReference>
<dbReference type="PANTHER" id="PTHR14021">
    <property type="entry name" value="IRON-SULFUR CLUSTER CO-CHAPERONE PROTEIN HSCB"/>
    <property type="match status" value="1"/>
</dbReference>
<dbReference type="PANTHER" id="PTHR14021:SF15">
    <property type="entry name" value="IRON-SULFUR CLUSTER CO-CHAPERONE PROTEIN HSCB"/>
    <property type="match status" value="1"/>
</dbReference>
<dbReference type="Pfam" id="PF07743">
    <property type="entry name" value="HSCB_C"/>
    <property type="match status" value="1"/>
</dbReference>
<dbReference type="SMART" id="SM00271">
    <property type="entry name" value="DnaJ"/>
    <property type="match status" value="1"/>
</dbReference>
<dbReference type="SUPFAM" id="SSF46565">
    <property type="entry name" value="Chaperone J-domain"/>
    <property type="match status" value="1"/>
</dbReference>
<dbReference type="SUPFAM" id="SSF47144">
    <property type="entry name" value="HSC20 (HSCB), C-terminal oligomerisation domain"/>
    <property type="match status" value="1"/>
</dbReference>
<dbReference type="PROSITE" id="PS50076">
    <property type="entry name" value="DNAJ_2"/>
    <property type="match status" value="1"/>
</dbReference>
<comment type="function">
    <text evidence="1">Co-chaperone involved in the maturation of iron-sulfur cluster-containing proteins. Seems to help targeting proteins to be folded toward HscA.</text>
</comment>
<comment type="subunit">
    <text evidence="1">Interacts with HscA and stimulates its ATPase activity. Interacts with IscU.</text>
</comment>
<comment type="similarity">
    <text evidence="1">Belongs to the HscB family.</text>
</comment>
<evidence type="ECO:0000255" key="1">
    <source>
        <dbReference type="HAMAP-Rule" id="MF_00682"/>
    </source>
</evidence>
<sequence length="171" mass="20138">MDYFTLFGLPARYQLDTQALSLRFQDLQRQYHPDKFASGSQAEQLAAVQQSATINQAWQTLRHPLMRAEYLLSLHGFDLASEQHTVRDTAFLMEQLELREELDEIEQAKDEARLESFIKRVKKMFDTRHQLMVEQLDNETWDAAADTVRKLRFLDKLRSSAEQLEEKLLDF</sequence>
<accession>B1XB02</accession>
<keyword id="KW-0143">Chaperone</keyword>
<reference key="1">
    <citation type="journal article" date="2008" name="J. Bacteriol.">
        <title>The complete genome sequence of Escherichia coli DH10B: insights into the biology of a laboratory workhorse.</title>
        <authorList>
            <person name="Durfee T."/>
            <person name="Nelson R."/>
            <person name="Baldwin S."/>
            <person name="Plunkett G. III"/>
            <person name="Burland V."/>
            <person name="Mau B."/>
            <person name="Petrosino J.F."/>
            <person name="Qin X."/>
            <person name="Muzny D.M."/>
            <person name="Ayele M."/>
            <person name="Gibbs R.A."/>
            <person name="Csorgo B."/>
            <person name="Posfai G."/>
            <person name="Weinstock G.M."/>
            <person name="Blattner F.R."/>
        </authorList>
    </citation>
    <scope>NUCLEOTIDE SEQUENCE [LARGE SCALE GENOMIC DNA]</scope>
    <source>
        <strain>K12 / DH10B</strain>
    </source>
</reference>
<gene>
    <name evidence="1" type="primary">hscB</name>
    <name type="ordered locus">ECDH10B_2694</name>
</gene>